<sequence>MLSTRLALRSNIPMADFTTWRVGGPAQWLLEPASVDETLEALQWAQQEHLPCRVIGAGSNLLIHDDGLPGLTLSLRKLQGASLNAENGVVEALAGEPIPTLARRAARAGLNGLAWSVGIPGTVGGAAVMNAGAQGGCTADWLESVRVAPLVGGVSFELSRDELDFDYRHSRLQDEELVVLSARFRLEPGHDPEEITRITSGNLSHRTSTQPYTQPSCGSVFRNPEPLKAGRLIEGLGLKGNRVGGAEVSTLHANFIVNTGAATAADIDSLIQRVQQQVEAAHSLHLHPEVKRLGFTEAA</sequence>
<organism>
    <name type="scientific">Parasynechococcus marenigrum (strain WH8102)</name>
    <dbReference type="NCBI Taxonomy" id="84588"/>
    <lineage>
        <taxon>Bacteria</taxon>
        <taxon>Bacillati</taxon>
        <taxon>Cyanobacteriota</taxon>
        <taxon>Cyanophyceae</taxon>
        <taxon>Synechococcales</taxon>
        <taxon>Prochlorococcaceae</taxon>
        <taxon>Parasynechococcus</taxon>
        <taxon>Parasynechococcus marenigrum</taxon>
    </lineage>
</organism>
<keyword id="KW-0131">Cell cycle</keyword>
<keyword id="KW-0132">Cell division</keyword>
<keyword id="KW-0133">Cell shape</keyword>
<keyword id="KW-0961">Cell wall biogenesis/degradation</keyword>
<keyword id="KW-0963">Cytoplasm</keyword>
<keyword id="KW-0274">FAD</keyword>
<keyword id="KW-0285">Flavoprotein</keyword>
<keyword id="KW-0521">NADP</keyword>
<keyword id="KW-0560">Oxidoreductase</keyword>
<keyword id="KW-0573">Peptidoglycan synthesis</keyword>
<proteinExistence type="inferred from homology"/>
<comment type="function">
    <text evidence="1">Cell wall formation.</text>
</comment>
<comment type="catalytic activity">
    <reaction evidence="1">
        <text>UDP-N-acetyl-alpha-D-muramate + NADP(+) = UDP-N-acetyl-3-O-(1-carboxyvinyl)-alpha-D-glucosamine + NADPH + H(+)</text>
        <dbReference type="Rhea" id="RHEA:12248"/>
        <dbReference type="ChEBI" id="CHEBI:15378"/>
        <dbReference type="ChEBI" id="CHEBI:57783"/>
        <dbReference type="ChEBI" id="CHEBI:58349"/>
        <dbReference type="ChEBI" id="CHEBI:68483"/>
        <dbReference type="ChEBI" id="CHEBI:70757"/>
        <dbReference type="EC" id="1.3.1.98"/>
    </reaction>
</comment>
<comment type="cofactor">
    <cofactor evidence="1">
        <name>FAD</name>
        <dbReference type="ChEBI" id="CHEBI:57692"/>
    </cofactor>
</comment>
<comment type="pathway">
    <text evidence="1">Cell wall biogenesis; peptidoglycan biosynthesis.</text>
</comment>
<comment type="subcellular location">
    <subcellularLocation>
        <location evidence="1">Cytoplasm</location>
    </subcellularLocation>
</comment>
<comment type="similarity">
    <text evidence="1">Belongs to the MurB family.</text>
</comment>
<name>MURB_PARMW</name>
<feature type="chain" id="PRO_0000179278" description="UDP-N-acetylenolpyruvoylglucosamine reductase">
    <location>
        <begin position="1"/>
        <end position="299"/>
    </location>
</feature>
<feature type="domain" description="FAD-binding PCMH-type" evidence="1">
    <location>
        <begin position="21"/>
        <end position="189"/>
    </location>
</feature>
<feature type="active site" evidence="1">
    <location>
        <position position="168"/>
    </location>
</feature>
<feature type="active site" description="Proton donor" evidence="1">
    <location>
        <position position="219"/>
    </location>
</feature>
<feature type="active site" evidence="1">
    <location>
        <position position="289"/>
    </location>
</feature>
<dbReference type="EC" id="1.3.1.98" evidence="1"/>
<dbReference type="EMBL" id="BX569689">
    <property type="protein sequence ID" value="CAE06543.1"/>
    <property type="molecule type" value="Genomic_DNA"/>
</dbReference>
<dbReference type="RefSeq" id="WP_011126906.1">
    <property type="nucleotide sequence ID" value="NC_005070.1"/>
</dbReference>
<dbReference type="SMR" id="Q7UA72"/>
<dbReference type="STRING" id="84588.SYNW0028"/>
<dbReference type="KEGG" id="syw:SYNW0028"/>
<dbReference type="eggNOG" id="COG0812">
    <property type="taxonomic scope" value="Bacteria"/>
</dbReference>
<dbReference type="HOGENOM" id="CLU_035304_1_1_3"/>
<dbReference type="UniPathway" id="UPA00219"/>
<dbReference type="Proteomes" id="UP000001422">
    <property type="component" value="Chromosome"/>
</dbReference>
<dbReference type="GO" id="GO:0005829">
    <property type="term" value="C:cytosol"/>
    <property type="evidence" value="ECO:0007669"/>
    <property type="project" value="TreeGrafter"/>
</dbReference>
<dbReference type="GO" id="GO:0071949">
    <property type="term" value="F:FAD binding"/>
    <property type="evidence" value="ECO:0007669"/>
    <property type="project" value="InterPro"/>
</dbReference>
<dbReference type="GO" id="GO:0008762">
    <property type="term" value="F:UDP-N-acetylmuramate dehydrogenase activity"/>
    <property type="evidence" value="ECO:0007669"/>
    <property type="project" value="UniProtKB-UniRule"/>
</dbReference>
<dbReference type="GO" id="GO:0051301">
    <property type="term" value="P:cell division"/>
    <property type="evidence" value="ECO:0007669"/>
    <property type="project" value="UniProtKB-KW"/>
</dbReference>
<dbReference type="GO" id="GO:0071555">
    <property type="term" value="P:cell wall organization"/>
    <property type="evidence" value="ECO:0007669"/>
    <property type="project" value="UniProtKB-KW"/>
</dbReference>
<dbReference type="GO" id="GO:0009252">
    <property type="term" value="P:peptidoglycan biosynthetic process"/>
    <property type="evidence" value="ECO:0007669"/>
    <property type="project" value="UniProtKB-UniRule"/>
</dbReference>
<dbReference type="GO" id="GO:0008360">
    <property type="term" value="P:regulation of cell shape"/>
    <property type="evidence" value="ECO:0007669"/>
    <property type="project" value="UniProtKB-KW"/>
</dbReference>
<dbReference type="Gene3D" id="3.30.465.10">
    <property type="match status" value="1"/>
</dbReference>
<dbReference type="Gene3D" id="3.90.78.10">
    <property type="entry name" value="UDP-N-acetylenolpyruvoylglucosamine reductase, C-terminal domain"/>
    <property type="match status" value="1"/>
</dbReference>
<dbReference type="Gene3D" id="3.30.43.10">
    <property type="entry name" value="Uridine Diphospho-n-acetylenolpyruvylglucosamine Reductase, domain 2"/>
    <property type="match status" value="1"/>
</dbReference>
<dbReference type="HAMAP" id="MF_00037">
    <property type="entry name" value="MurB"/>
    <property type="match status" value="1"/>
</dbReference>
<dbReference type="InterPro" id="IPR016166">
    <property type="entry name" value="FAD-bd_PCMH"/>
</dbReference>
<dbReference type="InterPro" id="IPR036318">
    <property type="entry name" value="FAD-bd_PCMH-like_sf"/>
</dbReference>
<dbReference type="InterPro" id="IPR016167">
    <property type="entry name" value="FAD-bd_PCMH_sub1"/>
</dbReference>
<dbReference type="InterPro" id="IPR016169">
    <property type="entry name" value="FAD-bd_PCMH_sub2"/>
</dbReference>
<dbReference type="InterPro" id="IPR003170">
    <property type="entry name" value="MurB"/>
</dbReference>
<dbReference type="InterPro" id="IPR011601">
    <property type="entry name" value="MurB_C"/>
</dbReference>
<dbReference type="InterPro" id="IPR036635">
    <property type="entry name" value="MurB_C_sf"/>
</dbReference>
<dbReference type="InterPro" id="IPR006094">
    <property type="entry name" value="Oxid_FAD_bind_N"/>
</dbReference>
<dbReference type="NCBIfam" id="TIGR00179">
    <property type="entry name" value="murB"/>
    <property type="match status" value="1"/>
</dbReference>
<dbReference type="NCBIfam" id="NF010480">
    <property type="entry name" value="PRK13905.1"/>
    <property type="match status" value="1"/>
</dbReference>
<dbReference type="PANTHER" id="PTHR21071">
    <property type="entry name" value="UDP-N-ACETYLENOLPYRUVOYLGLUCOSAMINE REDUCTASE"/>
    <property type="match status" value="1"/>
</dbReference>
<dbReference type="PANTHER" id="PTHR21071:SF4">
    <property type="entry name" value="UDP-N-ACETYLENOLPYRUVOYLGLUCOSAMINE REDUCTASE"/>
    <property type="match status" value="1"/>
</dbReference>
<dbReference type="Pfam" id="PF01565">
    <property type="entry name" value="FAD_binding_4"/>
    <property type="match status" value="1"/>
</dbReference>
<dbReference type="Pfam" id="PF02873">
    <property type="entry name" value="MurB_C"/>
    <property type="match status" value="1"/>
</dbReference>
<dbReference type="SUPFAM" id="SSF56176">
    <property type="entry name" value="FAD-binding/transporter-associated domain-like"/>
    <property type="match status" value="1"/>
</dbReference>
<dbReference type="SUPFAM" id="SSF56194">
    <property type="entry name" value="Uridine diphospho-N-Acetylenolpyruvylglucosamine reductase, MurB, C-terminal domain"/>
    <property type="match status" value="1"/>
</dbReference>
<dbReference type="PROSITE" id="PS51387">
    <property type="entry name" value="FAD_PCMH"/>
    <property type="match status" value="1"/>
</dbReference>
<reference key="1">
    <citation type="journal article" date="2003" name="Nature">
        <title>The genome of a motile marine Synechococcus.</title>
        <authorList>
            <person name="Palenik B."/>
            <person name="Brahamsha B."/>
            <person name="Larimer F.W."/>
            <person name="Land M.L."/>
            <person name="Hauser L."/>
            <person name="Chain P."/>
            <person name="Lamerdin J.E."/>
            <person name="Regala W."/>
            <person name="Allen E.E."/>
            <person name="McCarren J."/>
            <person name="Paulsen I.T."/>
            <person name="Dufresne A."/>
            <person name="Partensky F."/>
            <person name="Webb E.A."/>
            <person name="Waterbury J."/>
        </authorList>
    </citation>
    <scope>NUCLEOTIDE SEQUENCE [LARGE SCALE GENOMIC DNA]</scope>
    <source>
        <strain>WH8102</strain>
    </source>
</reference>
<evidence type="ECO:0000255" key="1">
    <source>
        <dbReference type="HAMAP-Rule" id="MF_00037"/>
    </source>
</evidence>
<accession>Q7UA72</accession>
<gene>
    <name evidence="1" type="primary">murB</name>
    <name type="ordered locus">SYNW0028</name>
</gene>
<protein>
    <recommendedName>
        <fullName evidence="1">UDP-N-acetylenolpyruvoylglucosamine reductase</fullName>
        <ecNumber evidence="1">1.3.1.98</ecNumber>
    </recommendedName>
    <alternativeName>
        <fullName evidence="1">UDP-N-acetylmuramate dehydrogenase</fullName>
    </alternativeName>
</protein>